<proteinExistence type="inferred from homology"/>
<feature type="chain" id="PRO_1000017053" description="tRNA pseudouridine synthase A">
    <location>
        <begin position="1"/>
        <end position="271"/>
    </location>
</feature>
<feature type="active site" description="Nucleophile" evidence="1">
    <location>
        <position position="52"/>
    </location>
</feature>
<feature type="binding site" evidence="1">
    <location>
        <position position="110"/>
    </location>
    <ligand>
        <name>substrate</name>
    </ligand>
</feature>
<dbReference type="EC" id="5.4.99.12" evidence="1"/>
<dbReference type="EMBL" id="CP000547">
    <property type="protein sequence ID" value="ABO02169.1"/>
    <property type="molecule type" value="Genomic_DNA"/>
</dbReference>
<dbReference type="SMR" id="A3MBU2"/>
<dbReference type="KEGG" id="bmn:BMA10247_A0527"/>
<dbReference type="GO" id="GO:0003723">
    <property type="term" value="F:RNA binding"/>
    <property type="evidence" value="ECO:0007669"/>
    <property type="project" value="InterPro"/>
</dbReference>
<dbReference type="GO" id="GO:0160147">
    <property type="term" value="F:tRNA pseudouridine(38-40) synthase activity"/>
    <property type="evidence" value="ECO:0007669"/>
    <property type="project" value="UniProtKB-EC"/>
</dbReference>
<dbReference type="GO" id="GO:0031119">
    <property type="term" value="P:tRNA pseudouridine synthesis"/>
    <property type="evidence" value="ECO:0007669"/>
    <property type="project" value="UniProtKB-UniRule"/>
</dbReference>
<dbReference type="CDD" id="cd02570">
    <property type="entry name" value="PseudoU_synth_EcTruA"/>
    <property type="match status" value="1"/>
</dbReference>
<dbReference type="FunFam" id="3.30.70.580:FF:000001">
    <property type="entry name" value="tRNA pseudouridine synthase A"/>
    <property type="match status" value="1"/>
</dbReference>
<dbReference type="Gene3D" id="3.30.70.660">
    <property type="entry name" value="Pseudouridine synthase I, catalytic domain, C-terminal subdomain"/>
    <property type="match status" value="1"/>
</dbReference>
<dbReference type="Gene3D" id="3.30.70.580">
    <property type="entry name" value="Pseudouridine synthase I, catalytic domain, N-terminal subdomain"/>
    <property type="match status" value="1"/>
</dbReference>
<dbReference type="HAMAP" id="MF_00171">
    <property type="entry name" value="TruA"/>
    <property type="match status" value="1"/>
</dbReference>
<dbReference type="InterPro" id="IPR020103">
    <property type="entry name" value="PsdUridine_synth_cat_dom_sf"/>
</dbReference>
<dbReference type="InterPro" id="IPR001406">
    <property type="entry name" value="PsdUridine_synth_TruA"/>
</dbReference>
<dbReference type="InterPro" id="IPR020097">
    <property type="entry name" value="PsdUridine_synth_TruA_a/b_dom"/>
</dbReference>
<dbReference type="InterPro" id="IPR020095">
    <property type="entry name" value="PsdUridine_synth_TruA_C"/>
</dbReference>
<dbReference type="InterPro" id="IPR020094">
    <property type="entry name" value="TruA/RsuA/RluB/E/F_N"/>
</dbReference>
<dbReference type="NCBIfam" id="TIGR00071">
    <property type="entry name" value="hisT_truA"/>
    <property type="match status" value="1"/>
</dbReference>
<dbReference type="PANTHER" id="PTHR11142">
    <property type="entry name" value="PSEUDOURIDYLATE SYNTHASE"/>
    <property type="match status" value="1"/>
</dbReference>
<dbReference type="PANTHER" id="PTHR11142:SF0">
    <property type="entry name" value="TRNA PSEUDOURIDINE SYNTHASE-LIKE 1"/>
    <property type="match status" value="1"/>
</dbReference>
<dbReference type="Pfam" id="PF01416">
    <property type="entry name" value="PseudoU_synth_1"/>
    <property type="match status" value="2"/>
</dbReference>
<dbReference type="PIRSF" id="PIRSF001430">
    <property type="entry name" value="tRNA_psdUrid_synth"/>
    <property type="match status" value="1"/>
</dbReference>
<dbReference type="SUPFAM" id="SSF55120">
    <property type="entry name" value="Pseudouridine synthase"/>
    <property type="match status" value="1"/>
</dbReference>
<evidence type="ECO:0000255" key="1">
    <source>
        <dbReference type="HAMAP-Rule" id="MF_00171"/>
    </source>
</evidence>
<accession>A3MBU2</accession>
<gene>
    <name evidence="1" type="primary">truA</name>
    <name type="ordered locus">BMA10247_A0527</name>
</gene>
<reference key="1">
    <citation type="journal article" date="2010" name="Genome Biol. Evol.">
        <title>Continuing evolution of Burkholderia mallei through genome reduction and large-scale rearrangements.</title>
        <authorList>
            <person name="Losada L."/>
            <person name="Ronning C.M."/>
            <person name="DeShazer D."/>
            <person name="Woods D."/>
            <person name="Fedorova N."/>
            <person name="Kim H.S."/>
            <person name="Shabalina S.A."/>
            <person name="Pearson T.R."/>
            <person name="Brinkac L."/>
            <person name="Tan P."/>
            <person name="Nandi T."/>
            <person name="Crabtree J."/>
            <person name="Badger J."/>
            <person name="Beckstrom-Sternberg S."/>
            <person name="Saqib M."/>
            <person name="Schutzer S.E."/>
            <person name="Keim P."/>
            <person name="Nierman W.C."/>
        </authorList>
    </citation>
    <scope>NUCLEOTIDE SEQUENCE [LARGE SCALE GENOMIC DNA]</scope>
    <source>
        <strain>NCTC 10247</strain>
    </source>
</reference>
<protein>
    <recommendedName>
        <fullName evidence="1">tRNA pseudouridine synthase A</fullName>
        <ecNumber evidence="1">5.4.99.12</ecNumber>
    </recommendedName>
    <alternativeName>
        <fullName evidence="1">tRNA pseudouridine(38-40) synthase</fullName>
    </alternativeName>
    <alternativeName>
        <fullName evidence="1">tRNA pseudouridylate synthase I</fullName>
    </alternativeName>
    <alternativeName>
        <fullName evidence="1">tRNA-uridine isomerase I</fullName>
    </alternativeName>
</protein>
<comment type="function">
    <text evidence="1">Formation of pseudouridine at positions 38, 39 and 40 in the anticodon stem and loop of transfer RNAs.</text>
</comment>
<comment type="catalytic activity">
    <reaction evidence="1">
        <text>uridine(38/39/40) in tRNA = pseudouridine(38/39/40) in tRNA</text>
        <dbReference type="Rhea" id="RHEA:22376"/>
        <dbReference type="Rhea" id="RHEA-COMP:10085"/>
        <dbReference type="Rhea" id="RHEA-COMP:10087"/>
        <dbReference type="ChEBI" id="CHEBI:65314"/>
        <dbReference type="ChEBI" id="CHEBI:65315"/>
        <dbReference type="EC" id="5.4.99.12"/>
    </reaction>
</comment>
<comment type="subunit">
    <text evidence="1">Homodimer.</text>
</comment>
<comment type="similarity">
    <text evidence="1">Belongs to the tRNA pseudouridine synthase TruA family.</text>
</comment>
<organism>
    <name type="scientific">Burkholderia mallei (strain NCTC 10247)</name>
    <dbReference type="NCBI Taxonomy" id="320389"/>
    <lineage>
        <taxon>Bacteria</taxon>
        <taxon>Pseudomonadati</taxon>
        <taxon>Pseudomonadota</taxon>
        <taxon>Betaproteobacteria</taxon>
        <taxon>Burkholderiales</taxon>
        <taxon>Burkholderiaceae</taxon>
        <taxon>Burkholderia</taxon>
        <taxon>pseudomallei group</taxon>
    </lineage>
</organism>
<sequence length="271" mass="30145">MMRIALGIQYDGAAFCGWQSQPHGKTVQDALERSLAEFAQTSLHTTVAGRTDTGVHGLGQVVHFDTDLDRADFSWVRGTNAFLPPTVAVQWAKPMPDTFHARFAAFERTYYYALYVHPVRSPMLAGRAGWVHTPLDVDAMREAAAHLVGEHDFSAFRSSECQAKSPVKHLYQIGIRPDGDFIHFRFRANAFLHHMVRNLMGCLVAVGRGRYPSSWLAEVLESRDRDCAAPTFMPEGLYLAHVGYPAEFAVPPAQLGSVPWSSVWADLDGRT</sequence>
<name>TRUA_BURM7</name>
<keyword id="KW-0413">Isomerase</keyword>
<keyword id="KW-0819">tRNA processing</keyword>